<dbReference type="EMBL" id="CP001598">
    <property type="protein sequence ID" value="ACQ49742.1"/>
    <property type="molecule type" value="Genomic_DNA"/>
</dbReference>
<dbReference type="RefSeq" id="WP_001148025.1">
    <property type="nucleotide sequence ID" value="NC_012659.1"/>
</dbReference>
<dbReference type="SMR" id="C3P9R0"/>
<dbReference type="GeneID" id="93010938"/>
<dbReference type="KEGG" id="bai:BAA_0131"/>
<dbReference type="HOGENOM" id="CLU_083987_3_3_9"/>
<dbReference type="GO" id="GO:0022625">
    <property type="term" value="C:cytosolic large ribosomal subunit"/>
    <property type="evidence" value="ECO:0007669"/>
    <property type="project" value="TreeGrafter"/>
</dbReference>
<dbReference type="GO" id="GO:0019843">
    <property type="term" value="F:rRNA binding"/>
    <property type="evidence" value="ECO:0007669"/>
    <property type="project" value="UniProtKB-UniRule"/>
</dbReference>
<dbReference type="GO" id="GO:0003735">
    <property type="term" value="F:structural constituent of ribosome"/>
    <property type="evidence" value="ECO:0007669"/>
    <property type="project" value="InterPro"/>
</dbReference>
<dbReference type="GO" id="GO:0006412">
    <property type="term" value="P:translation"/>
    <property type="evidence" value="ECO:0007669"/>
    <property type="project" value="UniProtKB-UniRule"/>
</dbReference>
<dbReference type="CDD" id="cd00336">
    <property type="entry name" value="Ribosomal_L22"/>
    <property type="match status" value="1"/>
</dbReference>
<dbReference type="FunFam" id="3.90.470.10:FF:000001">
    <property type="entry name" value="50S ribosomal protein L22"/>
    <property type="match status" value="1"/>
</dbReference>
<dbReference type="Gene3D" id="3.90.470.10">
    <property type="entry name" value="Ribosomal protein L22/L17"/>
    <property type="match status" value="1"/>
</dbReference>
<dbReference type="HAMAP" id="MF_01331_B">
    <property type="entry name" value="Ribosomal_uL22_B"/>
    <property type="match status" value="1"/>
</dbReference>
<dbReference type="InterPro" id="IPR001063">
    <property type="entry name" value="Ribosomal_uL22"/>
</dbReference>
<dbReference type="InterPro" id="IPR005727">
    <property type="entry name" value="Ribosomal_uL22_bac/chlpt-type"/>
</dbReference>
<dbReference type="InterPro" id="IPR047867">
    <property type="entry name" value="Ribosomal_uL22_bac/org-type"/>
</dbReference>
<dbReference type="InterPro" id="IPR018260">
    <property type="entry name" value="Ribosomal_uL22_CS"/>
</dbReference>
<dbReference type="InterPro" id="IPR036394">
    <property type="entry name" value="Ribosomal_uL22_sf"/>
</dbReference>
<dbReference type="NCBIfam" id="TIGR01044">
    <property type="entry name" value="rplV_bact"/>
    <property type="match status" value="1"/>
</dbReference>
<dbReference type="PANTHER" id="PTHR13501">
    <property type="entry name" value="CHLOROPLAST 50S RIBOSOMAL PROTEIN L22-RELATED"/>
    <property type="match status" value="1"/>
</dbReference>
<dbReference type="PANTHER" id="PTHR13501:SF8">
    <property type="entry name" value="LARGE RIBOSOMAL SUBUNIT PROTEIN UL22M"/>
    <property type="match status" value="1"/>
</dbReference>
<dbReference type="Pfam" id="PF00237">
    <property type="entry name" value="Ribosomal_L22"/>
    <property type="match status" value="1"/>
</dbReference>
<dbReference type="SUPFAM" id="SSF54843">
    <property type="entry name" value="Ribosomal protein L22"/>
    <property type="match status" value="1"/>
</dbReference>
<dbReference type="PROSITE" id="PS00464">
    <property type="entry name" value="RIBOSOMAL_L22"/>
    <property type="match status" value="1"/>
</dbReference>
<proteinExistence type="inferred from homology"/>
<evidence type="ECO:0000255" key="1">
    <source>
        <dbReference type="HAMAP-Rule" id="MF_01331"/>
    </source>
</evidence>
<evidence type="ECO:0000305" key="2"/>
<name>RL22_BACAA</name>
<reference key="1">
    <citation type="submission" date="2009-04" db="EMBL/GenBank/DDBJ databases">
        <title>Genome sequence of Bacillus anthracis A0248.</title>
        <authorList>
            <person name="Dodson R.J."/>
            <person name="Munk A.C."/>
            <person name="Bruce D."/>
            <person name="Detter C."/>
            <person name="Tapia R."/>
            <person name="Sutton G."/>
            <person name="Sims D."/>
            <person name="Brettin T."/>
        </authorList>
    </citation>
    <scope>NUCLEOTIDE SEQUENCE [LARGE SCALE GENOMIC DNA]</scope>
    <source>
        <strain>A0248</strain>
    </source>
</reference>
<feature type="chain" id="PRO_1000166041" description="Large ribosomal subunit protein uL22">
    <location>
        <begin position="1"/>
        <end position="113"/>
    </location>
</feature>
<comment type="function">
    <text evidence="1">This protein binds specifically to 23S rRNA; its binding is stimulated by other ribosomal proteins, e.g. L4, L17, and L20. It is important during the early stages of 50S assembly. It makes multiple contacts with different domains of the 23S rRNA in the assembled 50S subunit and ribosome (By similarity).</text>
</comment>
<comment type="function">
    <text evidence="1">The globular domain of the protein is located near the polypeptide exit tunnel on the outside of the subunit, while an extended beta-hairpin is found that lines the wall of the exit tunnel in the center of the 70S ribosome.</text>
</comment>
<comment type="subunit">
    <text evidence="1">Part of the 50S ribosomal subunit.</text>
</comment>
<comment type="similarity">
    <text evidence="1">Belongs to the universal ribosomal protein uL22 family.</text>
</comment>
<accession>C3P9R0</accession>
<organism>
    <name type="scientific">Bacillus anthracis (strain A0248)</name>
    <dbReference type="NCBI Taxonomy" id="592021"/>
    <lineage>
        <taxon>Bacteria</taxon>
        <taxon>Bacillati</taxon>
        <taxon>Bacillota</taxon>
        <taxon>Bacilli</taxon>
        <taxon>Bacillales</taxon>
        <taxon>Bacillaceae</taxon>
        <taxon>Bacillus</taxon>
        <taxon>Bacillus cereus group</taxon>
    </lineage>
</organism>
<protein>
    <recommendedName>
        <fullName evidence="1">Large ribosomal subunit protein uL22</fullName>
    </recommendedName>
    <alternativeName>
        <fullName evidence="2">50S ribosomal protein L22</fullName>
    </alternativeName>
</protein>
<keyword id="KW-0687">Ribonucleoprotein</keyword>
<keyword id="KW-0689">Ribosomal protein</keyword>
<keyword id="KW-0694">RNA-binding</keyword>
<keyword id="KW-0699">rRNA-binding</keyword>
<sequence>MQAKAVARTVRIAPRKVRLVVDLIRGKQVGEAIAILNHTPKTASPVVEKVLKSAIANAEHNYEMDINSLVVEKVFVDEGPTLKRFRPRAMGRASQINKRTSHITVVVSEKKEG</sequence>
<gene>
    <name evidence="1" type="primary">rplV</name>
    <name type="ordered locus">BAA_0131</name>
</gene>